<comment type="function">
    <text evidence="1">Contributes to K(+)/H(+) antiport activity by supporting proton efflux to control proton extrusion and homeostasis in chloroplasts in a light-dependent manner to modulate photosynthesis. Prevents excessive induction of non-photochemical quenching (NPQ) under continuous-light conditions. Indirectly promotes efficient inorganic carbon uptake into chloroplasts.</text>
</comment>
<comment type="catalytic activity">
    <reaction evidence="1">
        <text>K(+)(in) + H(+)(out) = K(+)(out) + H(+)(in)</text>
        <dbReference type="Rhea" id="RHEA:29467"/>
        <dbReference type="ChEBI" id="CHEBI:15378"/>
        <dbReference type="ChEBI" id="CHEBI:29103"/>
    </reaction>
</comment>
<comment type="subcellular location">
    <subcellularLocation>
        <location evidence="1">Plastid</location>
        <location evidence="1">Chloroplast inner membrane</location>
        <topology evidence="1">Multi-pass membrane protein</topology>
    </subcellularLocation>
</comment>
<comment type="similarity">
    <text evidence="1 2">Belongs to the CemA family.</text>
</comment>
<proteinExistence type="inferred from homology"/>
<geneLocation type="chloroplast"/>
<dbReference type="EMBL" id="AP002983">
    <property type="protein sequence ID" value="BAB33208.1"/>
    <property type="molecule type" value="Genomic_DNA"/>
</dbReference>
<dbReference type="RefSeq" id="NP_084810.1">
    <property type="nucleotide sequence ID" value="NC_002694.1"/>
</dbReference>
<dbReference type="SMR" id="P58155"/>
<dbReference type="GeneID" id="802860"/>
<dbReference type="OMA" id="VVIYHAI"/>
<dbReference type="GO" id="GO:0009706">
    <property type="term" value="C:chloroplast inner membrane"/>
    <property type="evidence" value="ECO:0007669"/>
    <property type="project" value="UniProtKB-SubCell"/>
</dbReference>
<dbReference type="GO" id="GO:0015297">
    <property type="term" value="F:antiporter activity"/>
    <property type="evidence" value="ECO:0007669"/>
    <property type="project" value="UniProtKB-KW"/>
</dbReference>
<dbReference type="GO" id="GO:0015078">
    <property type="term" value="F:proton transmembrane transporter activity"/>
    <property type="evidence" value="ECO:0007669"/>
    <property type="project" value="UniProtKB-UniRule"/>
</dbReference>
<dbReference type="GO" id="GO:0006813">
    <property type="term" value="P:potassium ion transport"/>
    <property type="evidence" value="ECO:0007669"/>
    <property type="project" value="UniProtKB-UniRule"/>
</dbReference>
<dbReference type="HAMAP" id="MF_01308">
    <property type="entry name" value="CemA_PxcA"/>
    <property type="match status" value="1"/>
</dbReference>
<dbReference type="InterPro" id="IPR004282">
    <property type="entry name" value="CemA"/>
</dbReference>
<dbReference type="PANTHER" id="PTHR33650:SF2">
    <property type="entry name" value="CHLOROPLAST ENVELOPE MEMBRANE PROTEIN"/>
    <property type="match status" value="1"/>
</dbReference>
<dbReference type="PANTHER" id="PTHR33650">
    <property type="entry name" value="CHLOROPLAST ENVELOPE MEMBRANE PROTEIN-RELATED"/>
    <property type="match status" value="1"/>
</dbReference>
<dbReference type="Pfam" id="PF03040">
    <property type="entry name" value="CemA"/>
    <property type="match status" value="1"/>
</dbReference>
<gene>
    <name evidence="1" type="primary">cemA</name>
    <name type="synonym">ycf10</name>
</gene>
<organism>
    <name type="scientific">Lotus japonicus</name>
    <name type="common">Lotus corniculatus var. japonicus</name>
    <dbReference type="NCBI Taxonomy" id="34305"/>
    <lineage>
        <taxon>Eukaryota</taxon>
        <taxon>Viridiplantae</taxon>
        <taxon>Streptophyta</taxon>
        <taxon>Embryophyta</taxon>
        <taxon>Tracheophyta</taxon>
        <taxon>Spermatophyta</taxon>
        <taxon>Magnoliopsida</taxon>
        <taxon>eudicotyledons</taxon>
        <taxon>Gunneridae</taxon>
        <taxon>Pentapetalae</taxon>
        <taxon>rosids</taxon>
        <taxon>fabids</taxon>
        <taxon>Fabales</taxon>
        <taxon>Fabaceae</taxon>
        <taxon>Papilionoideae</taxon>
        <taxon>50 kb inversion clade</taxon>
        <taxon>NPAAA clade</taxon>
        <taxon>Hologalegina</taxon>
        <taxon>robinioid clade</taxon>
        <taxon>Loteae</taxon>
        <taxon>Lotus</taxon>
    </lineage>
</organism>
<reference key="1">
    <citation type="journal article" date="2000" name="DNA Res.">
        <title>Complete structure of the chloroplast genome of a legume, Lotus japonicus.</title>
        <authorList>
            <person name="Kato T."/>
            <person name="Kaneko T."/>
            <person name="Sato S."/>
            <person name="Nakamura Y."/>
            <person name="Tabata S."/>
        </authorList>
    </citation>
    <scope>NUCLEOTIDE SEQUENCE [LARGE SCALE GENOMIC DNA]</scope>
    <source>
        <strain>cv. Miyakojima MG-20</strain>
    </source>
</reference>
<feature type="chain" id="PRO_0000216645" description="Potassium/proton antiporter CemA">
    <location>
        <begin position="1"/>
        <end position="229"/>
    </location>
</feature>
<feature type="transmembrane region" description="Helical" evidence="1">
    <location>
        <begin position="114"/>
        <end position="134"/>
    </location>
</feature>
<feature type="transmembrane region" description="Helical" evidence="1">
    <location>
        <begin position="189"/>
        <end position="209"/>
    </location>
</feature>
<name>CEMA_LOTJA</name>
<protein>
    <recommendedName>
        <fullName evidence="1">Potassium/proton antiporter CemA</fullName>
    </recommendedName>
    <alternativeName>
        <fullName evidence="1">Chloroplast envelope membrane protein A</fullName>
        <shortName evidence="1">CemA</shortName>
    </alternativeName>
</protein>
<sequence>MAKKKASIPFLSLTSIVFLPWCISFTCKKGMEYWVTNWWNTKQSEIFLNIIQEKSILKKFMELEELFFLDELLKEYSETRLQILRTGIHKETIQLIKTHNEDRIYTILHFSTNIIYFIILSGYSILGNQELIILNSWVQEFLYNLSDTIKAFSILLVTDLCIGFHSTHGWELLIGSVYKDFGFIQNDQIISGLVSTFPVILDTILKYWIFRYLNRVSPSLVVIYHSMND</sequence>
<evidence type="ECO:0000255" key="1">
    <source>
        <dbReference type="HAMAP-Rule" id="MF_01308"/>
    </source>
</evidence>
<evidence type="ECO:0000305" key="2"/>
<accession>P58155</accession>
<keyword id="KW-0050">Antiport</keyword>
<keyword id="KW-0150">Chloroplast</keyword>
<keyword id="KW-0375">Hydrogen ion transport</keyword>
<keyword id="KW-0406">Ion transport</keyword>
<keyword id="KW-0472">Membrane</keyword>
<keyword id="KW-0934">Plastid</keyword>
<keyword id="KW-1001">Plastid inner membrane</keyword>
<keyword id="KW-0630">Potassium</keyword>
<keyword id="KW-0633">Potassium transport</keyword>
<keyword id="KW-0812">Transmembrane</keyword>
<keyword id="KW-1133">Transmembrane helix</keyword>
<keyword id="KW-0813">Transport</keyword>